<organism>
    <name type="scientific">Rhizobium etli (strain ATCC 51251 / DSM 11541 / JCM 21823 / NBRC 15573 / CFN 42)</name>
    <dbReference type="NCBI Taxonomy" id="347834"/>
    <lineage>
        <taxon>Bacteria</taxon>
        <taxon>Pseudomonadati</taxon>
        <taxon>Pseudomonadota</taxon>
        <taxon>Alphaproteobacteria</taxon>
        <taxon>Hyphomicrobiales</taxon>
        <taxon>Rhizobiaceae</taxon>
        <taxon>Rhizobium/Agrobacterium group</taxon>
        <taxon>Rhizobium</taxon>
    </lineage>
</organism>
<reference key="1">
    <citation type="journal article" date="2006" name="Proc. Natl. Acad. Sci. U.S.A.">
        <title>The partitioned Rhizobium etli genome: genetic and metabolic redundancy in seven interacting replicons.</title>
        <authorList>
            <person name="Gonzalez V."/>
            <person name="Santamaria R.I."/>
            <person name="Bustos P."/>
            <person name="Hernandez-Gonzalez I."/>
            <person name="Medrano-Soto A."/>
            <person name="Moreno-Hagelsieb G."/>
            <person name="Janga S.C."/>
            <person name="Ramirez M.A."/>
            <person name="Jimenez-Jacinto V."/>
            <person name="Collado-Vides J."/>
            <person name="Davila G."/>
        </authorList>
    </citation>
    <scope>NUCLEOTIDE SEQUENCE [LARGE SCALE GENOMIC DNA]</scope>
    <source>
        <strain>ATCC 51251 / DSM 11541 / JCM 21823 / NBRC 15573 / CFN 42</strain>
    </source>
</reference>
<protein>
    <recommendedName>
        <fullName evidence="1">Probable transcriptional regulatory protein RHE_CH03475</fullName>
    </recommendedName>
</protein>
<feature type="chain" id="PRO_0000257112" description="Probable transcriptional regulatory protein RHE_CH03475">
    <location>
        <begin position="1"/>
        <end position="248"/>
    </location>
</feature>
<dbReference type="EMBL" id="CP000133">
    <property type="protein sequence ID" value="ABC92231.1"/>
    <property type="molecule type" value="Genomic_DNA"/>
</dbReference>
<dbReference type="RefSeq" id="WP_011426698.1">
    <property type="nucleotide sequence ID" value="NC_007761.1"/>
</dbReference>
<dbReference type="SMR" id="Q2K4K5"/>
<dbReference type="KEGG" id="ret:RHE_CH03475"/>
<dbReference type="eggNOG" id="COG0217">
    <property type="taxonomic scope" value="Bacteria"/>
</dbReference>
<dbReference type="HOGENOM" id="CLU_062974_2_2_5"/>
<dbReference type="OrthoDB" id="9781053at2"/>
<dbReference type="Proteomes" id="UP000001936">
    <property type="component" value="Chromosome"/>
</dbReference>
<dbReference type="GO" id="GO:0005829">
    <property type="term" value="C:cytosol"/>
    <property type="evidence" value="ECO:0007669"/>
    <property type="project" value="TreeGrafter"/>
</dbReference>
<dbReference type="GO" id="GO:0003677">
    <property type="term" value="F:DNA binding"/>
    <property type="evidence" value="ECO:0007669"/>
    <property type="project" value="UniProtKB-UniRule"/>
</dbReference>
<dbReference type="GO" id="GO:0006355">
    <property type="term" value="P:regulation of DNA-templated transcription"/>
    <property type="evidence" value="ECO:0007669"/>
    <property type="project" value="UniProtKB-UniRule"/>
</dbReference>
<dbReference type="FunFam" id="1.10.10.200:FF:000002">
    <property type="entry name" value="Probable transcriptional regulatory protein CLM62_37755"/>
    <property type="match status" value="1"/>
</dbReference>
<dbReference type="Gene3D" id="1.10.10.200">
    <property type="match status" value="1"/>
</dbReference>
<dbReference type="Gene3D" id="3.30.70.980">
    <property type="match status" value="2"/>
</dbReference>
<dbReference type="HAMAP" id="MF_00693">
    <property type="entry name" value="Transcrip_reg_TACO1"/>
    <property type="match status" value="1"/>
</dbReference>
<dbReference type="InterPro" id="IPR017856">
    <property type="entry name" value="Integrase-like_N"/>
</dbReference>
<dbReference type="InterPro" id="IPR048300">
    <property type="entry name" value="TACO1_YebC-like_2nd/3rd_dom"/>
</dbReference>
<dbReference type="InterPro" id="IPR049083">
    <property type="entry name" value="TACO1_YebC_N"/>
</dbReference>
<dbReference type="InterPro" id="IPR002876">
    <property type="entry name" value="Transcrip_reg_TACO1-like"/>
</dbReference>
<dbReference type="InterPro" id="IPR026564">
    <property type="entry name" value="Transcrip_reg_TACO1-like_dom3"/>
</dbReference>
<dbReference type="InterPro" id="IPR029072">
    <property type="entry name" value="YebC-like"/>
</dbReference>
<dbReference type="NCBIfam" id="NF001030">
    <property type="entry name" value="PRK00110.1"/>
    <property type="match status" value="1"/>
</dbReference>
<dbReference type="NCBIfam" id="NF009044">
    <property type="entry name" value="PRK12378.1"/>
    <property type="match status" value="1"/>
</dbReference>
<dbReference type="NCBIfam" id="TIGR01033">
    <property type="entry name" value="YebC/PmpR family DNA-binding transcriptional regulator"/>
    <property type="match status" value="1"/>
</dbReference>
<dbReference type="PANTHER" id="PTHR12532:SF6">
    <property type="entry name" value="TRANSCRIPTIONAL REGULATORY PROTEIN YEBC-RELATED"/>
    <property type="match status" value="1"/>
</dbReference>
<dbReference type="PANTHER" id="PTHR12532">
    <property type="entry name" value="TRANSLATIONAL ACTIVATOR OF CYTOCHROME C OXIDASE 1"/>
    <property type="match status" value="1"/>
</dbReference>
<dbReference type="Pfam" id="PF20772">
    <property type="entry name" value="TACO1_YebC_N"/>
    <property type="match status" value="1"/>
</dbReference>
<dbReference type="Pfam" id="PF01709">
    <property type="entry name" value="Transcrip_reg"/>
    <property type="match status" value="1"/>
</dbReference>
<dbReference type="SUPFAM" id="SSF75625">
    <property type="entry name" value="YebC-like"/>
    <property type="match status" value="1"/>
</dbReference>
<evidence type="ECO:0000255" key="1">
    <source>
        <dbReference type="HAMAP-Rule" id="MF_00693"/>
    </source>
</evidence>
<gene>
    <name type="ordered locus">RHE_CH03475</name>
</gene>
<name>Y3475_RHIEC</name>
<accession>Q2K4K5</accession>
<proteinExistence type="inferred from homology"/>
<comment type="subcellular location">
    <subcellularLocation>
        <location evidence="1">Cytoplasm</location>
    </subcellularLocation>
</comment>
<comment type="similarity">
    <text evidence="1">Belongs to the TACO1 family.</text>
</comment>
<keyword id="KW-0963">Cytoplasm</keyword>
<keyword id="KW-0238">DNA-binding</keyword>
<keyword id="KW-1185">Reference proteome</keyword>
<keyword id="KW-0804">Transcription</keyword>
<keyword id="KW-0805">Transcription regulation</keyword>
<sequence>MAGHSQFKNIMHRKGRQDAVRSKMFSKLAREITVAAKAGLPDPTMNARLRLAIQNAKAQSMPKDNIDRAIKKAAGADGENYDEVRYEGYGPGGTAIIVEALTDNRNRTASNVRSIFTKAGGALGETGSVSFSFDHVGEITYKLAAGDADKVMEAAIEAGADDVETDEEGHYITCAFEALGEVSKALEASLGEAETVKAVWRAQNNVPVDEEKAQSLMKLIDSLEDDDDVQNVYSNFEVSEEVLAKLSA</sequence>